<protein>
    <recommendedName>
        <fullName>Alkyl hydroperoxide reductase subunit F</fullName>
        <ecNumber>1.8.1.-</ecNumber>
    </recommendedName>
</protein>
<keyword id="KW-1015">Disulfide bond</keyword>
<keyword id="KW-0274">FAD</keyword>
<keyword id="KW-0285">Flavoprotein</keyword>
<keyword id="KW-0520">NAD</keyword>
<keyword id="KW-0521">NADP</keyword>
<keyword id="KW-0560">Oxidoreductase</keyword>
<keyword id="KW-0676">Redox-active center</keyword>
<comment type="function">
    <text evidence="1">Serves to protect the cell against DNA damage by alkyl hydroperoxides. It can use either NADH or NADPH as electron donor for direct reduction of redox dyes or of alkyl hydroperoxides when combined with the AhpC protein (By similarity).</text>
</comment>
<comment type="cofactor">
    <cofactor evidence="1">
        <name>FAD</name>
        <dbReference type="ChEBI" id="CHEBI:57692"/>
    </cofactor>
    <text evidence="1">Binds 1 FAD per subunit.</text>
</comment>
<comment type="subunit">
    <text evidence="1">Homodimer.</text>
</comment>
<comment type="miscellaneous">
    <text>The active site is a redox-active disulfide bond.</text>
</comment>
<comment type="similarity">
    <text evidence="2">Belongs to the class-II pyridine nucleotide-disulfide oxidoreductase family.</text>
</comment>
<reference key="1">
    <citation type="journal article" date="2003" name="Mol. Microbiol.">
        <title>Genome-based analysis of virulence genes in a non-biofilm-forming Staphylococcus epidermidis strain (ATCC 12228).</title>
        <authorList>
            <person name="Zhang Y.-Q."/>
            <person name="Ren S.-X."/>
            <person name="Li H.-L."/>
            <person name="Wang Y.-X."/>
            <person name="Fu G."/>
            <person name="Yang J."/>
            <person name="Qin Z.-Q."/>
            <person name="Miao Y.-G."/>
            <person name="Wang W.-Y."/>
            <person name="Chen R.-S."/>
            <person name="Shen Y."/>
            <person name="Chen Z."/>
            <person name="Yuan Z.-H."/>
            <person name="Zhao G.-P."/>
            <person name="Qu D."/>
            <person name="Danchin A."/>
            <person name="Wen Y.-M."/>
        </authorList>
    </citation>
    <scope>NUCLEOTIDE SEQUENCE [LARGE SCALE GENOMIC DNA]</scope>
    <source>
        <strain>ATCC 12228 / FDA PCI 1200</strain>
    </source>
</reference>
<name>AHPF_STAES</name>
<gene>
    <name type="primary">ahpF</name>
    <name type="ordered locus">SE_2358</name>
</gene>
<evidence type="ECO:0000250" key="1"/>
<evidence type="ECO:0000305" key="2"/>
<dbReference type="EC" id="1.8.1.-"/>
<dbReference type="EMBL" id="AE015929">
    <property type="protein sequence ID" value="AAO06001.1"/>
    <property type="molecule type" value="Genomic_DNA"/>
</dbReference>
<dbReference type="RefSeq" id="NP_765913.1">
    <property type="nucleotide sequence ID" value="NC_004461.1"/>
</dbReference>
<dbReference type="RefSeq" id="WP_001829382.1">
    <property type="nucleotide sequence ID" value="NZ_WBME01000004.1"/>
</dbReference>
<dbReference type="SMR" id="Q8CMQ1"/>
<dbReference type="KEGG" id="sep:SE_2358"/>
<dbReference type="PATRIC" id="fig|176280.10.peg.2301"/>
<dbReference type="eggNOG" id="COG3634">
    <property type="taxonomic scope" value="Bacteria"/>
</dbReference>
<dbReference type="HOGENOM" id="CLU_031864_4_2_9"/>
<dbReference type="OrthoDB" id="9806179at2"/>
<dbReference type="Proteomes" id="UP000001411">
    <property type="component" value="Chromosome"/>
</dbReference>
<dbReference type="GO" id="GO:0050660">
    <property type="term" value="F:flavin adenine dinucleotide binding"/>
    <property type="evidence" value="ECO:0007669"/>
    <property type="project" value="InterPro"/>
</dbReference>
<dbReference type="GO" id="GO:0051287">
    <property type="term" value="F:NAD binding"/>
    <property type="evidence" value="ECO:0007669"/>
    <property type="project" value="InterPro"/>
</dbReference>
<dbReference type="GO" id="GO:0102039">
    <property type="term" value="F:NADH-dependent peroxiredoxin activity"/>
    <property type="evidence" value="ECO:0007669"/>
    <property type="project" value="InterPro"/>
</dbReference>
<dbReference type="GO" id="GO:0016668">
    <property type="term" value="F:oxidoreductase activity, acting on a sulfur group of donors, NAD(P) as acceptor"/>
    <property type="evidence" value="ECO:0007669"/>
    <property type="project" value="UniProtKB-ARBA"/>
</dbReference>
<dbReference type="GO" id="GO:0000302">
    <property type="term" value="P:response to reactive oxygen species"/>
    <property type="evidence" value="ECO:0007669"/>
    <property type="project" value="InterPro"/>
</dbReference>
<dbReference type="CDD" id="cd03026">
    <property type="entry name" value="AhpF_NTD_C"/>
    <property type="match status" value="1"/>
</dbReference>
<dbReference type="CDD" id="cd02974">
    <property type="entry name" value="AhpF_NTD_N"/>
    <property type="match status" value="1"/>
</dbReference>
<dbReference type="FunFam" id="3.50.50.60:FF:000007">
    <property type="entry name" value="Alkyl hydroperoxide reductase, F subunit"/>
    <property type="match status" value="1"/>
</dbReference>
<dbReference type="Gene3D" id="3.40.30.80">
    <property type="match status" value="1"/>
</dbReference>
<dbReference type="Gene3D" id="3.50.50.60">
    <property type="entry name" value="FAD/NAD(P)-binding domain"/>
    <property type="match status" value="2"/>
</dbReference>
<dbReference type="InterPro" id="IPR044141">
    <property type="entry name" value="AhpF_NTD_C"/>
</dbReference>
<dbReference type="InterPro" id="IPR044142">
    <property type="entry name" value="AhpF_NTD_N"/>
</dbReference>
<dbReference type="InterPro" id="IPR012081">
    <property type="entry name" value="Alkyl_hydroperoxide_Rdtase_suF"/>
</dbReference>
<dbReference type="InterPro" id="IPR036188">
    <property type="entry name" value="FAD/NAD-bd_sf"/>
</dbReference>
<dbReference type="InterPro" id="IPR023753">
    <property type="entry name" value="FAD/NAD-binding_dom"/>
</dbReference>
<dbReference type="InterPro" id="IPR050097">
    <property type="entry name" value="Ferredoxin-NADP_redctase_2"/>
</dbReference>
<dbReference type="InterPro" id="IPR008255">
    <property type="entry name" value="Pyr_nucl-diS_OxRdtase_2_AS"/>
</dbReference>
<dbReference type="InterPro" id="IPR012336">
    <property type="entry name" value="Thioredoxin-like_fold"/>
</dbReference>
<dbReference type="InterPro" id="IPR036249">
    <property type="entry name" value="Thioredoxin-like_sf"/>
</dbReference>
<dbReference type="NCBIfam" id="TIGR03140">
    <property type="entry name" value="AhpF"/>
    <property type="match status" value="1"/>
</dbReference>
<dbReference type="PANTHER" id="PTHR48105">
    <property type="entry name" value="THIOREDOXIN REDUCTASE 1-RELATED-RELATED"/>
    <property type="match status" value="1"/>
</dbReference>
<dbReference type="Pfam" id="PF07992">
    <property type="entry name" value="Pyr_redox_2"/>
    <property type="match status" value="1"/>
</dbReference>
<dbReference type="Pfam" id="PF13192">
    <property type="entry name" value="Thioredoxin_3"/>
    <property type="match status" value="1"/>
</dbReference>
<dbReference type="PIRSF" id="PIRSF000238">
    <property type="entry name" value="AhpF"/>
    <property type="match status" value="1"/>
</dbReference>
<dbReference type="PRINTS" id="PR00368">
    <property type="entry name" value="FADPNR"/>
</dbReference>
<dbReference type="PRINTS" id="PR00469">
    <property type="entry name" value="PNDRDTASEII"/>
</dbReference>
<dbReference type="SUPFAM" id="SSF51905">
    <property type="entry name" value="FAD/NAD(P)-binding domain"/>
    <property type="match status" value="1"/>
</dbReference>
<dbReference type="SUPFAM" id="SSF52833">
    <property type="entry name" value="Thioredoxin-like"/>
    <property type="match status" value="2"/>
</dbReference>
<dbReference type="PROSITE" id="PS00573">
    <property type="entry name" value="PYRIDINE_REDOX_2"/>
    <property type="match status" value="1"/>
</dbReference>
<accession>Q8CMQ1</accession>
<sequence>MLNADLKQQLQQLLELMEGDVEFVASLGSDDKSNELKELLNEIAEMSAHITITEKSLKRTPSFSVNRPGEETGITFAGIPLGHEFNSLVLAILQVSGRAPKEKQSIIDQIKGLEGPFHFETFVSLTCQKCPDVVQALNLMSVINPNITHTMIDGAVFREESENIMAVPAVFLDGQEFGNGRMTVQDILTKLGSTQDASEFNDKDPYDVLIVGGGPASGSAAIYTARKGLRTGIVADRIGGQVNDTAGIENFITVKETTGSEFSSNLAEHIAQYDIDTMTGIRATNIEKTDSAIRVTLENDAVLESKTVIISTGASWRKLNIPGEDRLINKGVAFCPHCDGPLFENKDVAVIGGGNSGVEAAIDLAGIVKHVTLFEYASELKADSVLQERLRSLPNVDIKTSAKTTEVIGDDYVTGISYEDMTTGESQVVNLDGIFVQIGLVPNTSWLQNAVELNERGEVMINRDNATNVPGIFAAGDVTDQKNKQIIISMGAGANAALNAFDYIIRN</sequence>
<feature type="chain" id="PRO_0000166785" description="Alkyl hydroperoxide reductase subunit F">
    <location>
        <begin position="1"/>
        <end position="507"/>
    </location>
</feature>
<feature type="binding site" evidence="1">
    <location>
        <begin position="207"/>
        <end position="222"/>
    </location>
    <ligand>
        <name>FAD</name>
        <dbReference type="ChEBI" id="CHEBI:57692"/>
    </ligand>
</feature>
<feature type="binding site" evidence="1">
    <location>
        <begin position="347"/>
        <end position="361"/>
    </location>
    <ligand>
        <name>NAD(+)</name>
        <dbReference type="ChEBI" id="CHEBI:57540"/>
    </ligand>
</feature>
<feature type="binding site" evidence="1">
    <location>
        <begin position="467"/>
        <end position="477"/>
    </location>
    <ligand>
        <name>FAD</name>
        <dbReference type="ChEBI" id="CHEBI:57692"/>
    </ligand>
</feature>
<feature type="disulfide bond" description="Redox-active" evidence="1">
    <location>
        <begin position="335"/>
        <end position="338"/>
    </location>
</feature>
<proteinExistence type="inferred from homology"/>
<organism>
    <name type="scientific">Staphylococcus epidermidis (strain ATCC 12228 / FDA PCI 1200)</name>
    <dbReference type="NCBI Taxonomy" id="176280"/>
    <lineage>
        <taxon>Bacteria</taxon>
        <taxon>Bacillati</taxon>
        <taxon>Bacillota</taxon>
        <taxon>Bacilli</taxon>
        <taxon>Bacillales</taxon>
        <taxon>Staphylococcaceae</taxon>
        <taxon>Staphylococcus</taxon>
    </lineage>
</organism>